<comment type="function">
    <text evidence="2 3">Catalyzes the NAD(H)-dependent interconversion of D-fructose 6-phosphate and D-mannitol 1-phosphate in the mannitol metabolic pathway. Required for the process of sporulation on senescing leaf material.</text>
</comment>
<comment type="catalytic activity">
    <reaction>
        <text>D-mannitol 1-phosphate + NAD(+) = beta-D-fructose 6-phosphate + NADH + H(+)</text>
        <dbReference type="Rhea" id="RHEA:19661"/>
        <dbReference type="ChEBI" id="CHEBI:15378"/>
        <dbReference type="ChEBI" id="CHEBI:57540"/>
        <dbReference type="ChEBI" id="CHEBI:57634"/>
        <dbReference type="ChEBI" id="CHEBI:57945"/>
        <dbReference type="ChEBI" id="CHEBI:61381"/>
        <dbReference type="EC" id="1.1.1.17"/>
    </reaction>
</comment>
<comment type="subunit">
    <text evidence="1">Monomer.</text>
</comment>
<comment type="similarity">
    <text evidence="4">Belongs to the mannitol dehydrogenase family.</text>
</comment>
<feature type="chain" id="PRO_0000371534" description="Mannitol-1-phosphate 5-dehydrogenase">
    <location>
        <begin position="1"/>
        <end position="390"/>
    </location>
</feature>
<feature type="active site" evidence="1">
    <location>
        <position position="216"/>
    </location>
</feature>
<feature type="binding site" evidence="1">
    <location>
        <begin position="7"/>
        <end position="18"/>
    </location>
    <ligand>
        <name>NAD(+)</name>
        <dbReference type="ChEBI" id="CHEBI:57540"/>
    </ligand>
</feature>
<feature type="sequence conflict" description="In Ref. 1; AAT11122." evidence="4" ref="1">
    <original>F</original>
    <variation>L</variation>
    <location>
        <position position="101"/>
    </location>
</feature>
<feature type="sequence conflict" description="In Ref. 1; AAT11122." evidence="4" ref="1">
    <original>E</original>
    <variation>K</variation>
    <location>
        <position position="295"/>
    </location>
</feature>
<reference key="1">
    <citation type="journal article" date="2005" name="Mol. Plant Microbe Interact.">
        <title>Mannitol 1-phosphate metabolism is required for sporulation in planta of the wheat pathogen Stagonospora nodorum.</title>
        <authorList>
            <person name="Solomon P.S."/>
            <person name="Tan K.-C."/>
            <person name="Oliver R.P."/>
        </authorList>
    </citation>
    <scope>NUCLEOTIDE SEQUENCE [MRNA]</scope>
    <scope>FUNCTION</scope>
    <source>
        <strain>SN15 / ATCC MYA-4574 / FGSC 10173</strain>
    </source>
</reference>
<reference key="2">
    <citation type="journal article" date="2007" name="Plant Cell">
        <title>Dothideomycete-plant interactions illuminated by genome sequencing and EST analysis of the wheat pathogen Stagonospora nodorum.</title>
        <authorList>
            <person name="Hane J.K."/>
            <person name="Lowe R.G.T."/>
            <person name="Solomon P.S."/>
            <person name="Tan K.-C."/>
            <person name="Schoch C.L."/>
            <person name="Spatafora J.W."/>
            <person name="Crous P.W."/>
            <person name="Kodira C.D."/>
            <person name="Birren B.W."/>
            <person name="Galagan J.E."/>
            <person name="Torriani S.F.F."/>
            <person name="McDonald B.A."/>
            <person name="Oliver R.P."/>
        </authorList>
    </citation>
    <scope>NUCLEOTIDE SEQUENCE [LARGE SCALE GENOMIC DNA]</scope>
    <source>
        <strain>SN15 / ATCC MYA-4574 / FGSC 10173</strain>
    </source>
</reference>
<reference key="3">
    <citation type="submission" date="2008-08" db="EMBL/GenBank/DDBJ databases">
        <title>Genetic mapping of Phaeosphaeria nodorum.</title>
        <authorList>
            <person name="Malkus A."/>
            <person name="Chiu E.Y."/>
            <person name="Ueng P.P."/>
        </authorList>
    </citation>
    <scope>NUCLEOTIDE SEQUENCE [GENOMIC DNA] OF 9-389</scope>
    <source>
        <strain>S-81-B13B</strain>
        <strain>Sn37-1</strain>
    </source>
</reference>
<reference key="4">
    <citation type="journal article" date="2006" name="Biochem. J.">
        <title>Mannitol is required for asexual sporulation in the wheat pathogen Stagonospora nodorum (glume blotch).</title>
        <authorList>
            <person name="Solomon P.S."/>
            <person name="Waters O.D.C."/>
            <person name="Joergens C.I."/>
            <person name="Lowe R.G.T."/>
            <person name="Rechberger J."/>
            <person name="Trengove R.D."/>
            <person name="Oliver R.P."/>
        </authorList>
    </citation>
    <scope>FUNCTION</scope>
</reference>
<evidence type="ECO:0000250" key="1"/>
<evidence type="ECO:0000269" key="2">
    <source>
    </source>
</evidence>
<evidence type="ECO:0000269" key="3">
    <source>
    </source>
</evidence>
<evidence type="ECO:0000305" key="4"/>
<proteinExistence type="evidence at transcript level"/>
<accession>Q0U6E8</accession>
<accession>B6DQL1</accession>
<accession>Q5DQ93</accession>
<protein>
    <recommendedName>
        <fullName>Mannitol-1-phosphate 5-dehydrogenase</fullName>
        <shortName>M1PDH</shortName>
        <shortName>MPD</shortName>
        <shortName>MPDH</shortName>
        <ecNumber>1.1.1.17</ecNumber>
    </recommendedName>
</protein>
<gene>
    <name type="primary">mpd1</name>
    <name type="ORF">SNOG_12666</name>
</gene>
<sequence>MPYDKKAVHFGGGNIGRGFVAEFLHNSGYEVVFVDVMDSIIEALQKQSSYTVTEIGDDGEREFTIDHYRALNSKHEMDKVVQEIASADVVTCAVGPNILKFVAEPVAKAIDARTLDYPIAVIACENAINATTTWRGFIEGKLSEDSKSNLDKKARFANSAIDRIVPVQDKDAGLNVKIEKFYEWCVEQKPFENGGKKPDVKGIHYVDDLEPYIERKLFTVNTSHATAAYYGHQAKKQYIHEVLQDKKLHDIVRDAVKETAHLIVSKHGVSVQEQNDYVDSIIKRISNPVLKDNVERVGRAPLRKLSRKERFVGPAAQLAERGEKVDALLGAIEQAYLFQNVEGDEESAELAKILKENSAEEVVTKVNGLDKSHPLFEKILPIVKKVQGGS</sequence>
<organism>
    <name type="scientific">Phaeosphaeria nodorum (strain SN15 / ATCC MYA-4574 / FGSC 10173)</name>
    <name type="common">Glume blotch fungus</name>
    <name type="synonym">Parastagonospora nodorum</name>
    <dbReference type="NCBI Taxonomy" id="321614"/>
    <lineage>
        <taxon>Eukaryota</taxon>
        <taxon>Fungi</taxon>
        <taxon>Dikarya</taxon>
        <taxon>Ascomycota</taxon>
        <taxon>Pezizomycotina</taxon>
        <taxon>Dothideomycetes</taxon>
        <taxon>Pleosporomycetidae</taxon>
        <taxon>Pleosporales</taxon>
        <taxon>Pleosporineae</taxon>
        <taxon>Phaeosphaeriaceae</taxon>
        <taxon>Parastagonospora</taxon>
    </lineage>
</organism>
<name>MTLD_PHANO</name>
<dbReference type="EC" id="1.1.1.17"/>
<dbReference type="EMBL" id="AY547308">
    <property type="protein sequence ID" value="AAT11122.1"/>
    <property type="molecule type" value="mRNA"/>
</dbReference>
<dbReference type="EMBL" id="CH445347">
    <property type="protein sequence ID" value="EAT79964.1"/>
    <property type="molecule type" value="Genomic_DNA"/>
</dbReference>
<dbReference type="EMBL" id="FJ151548">
    <property type="protein sequence ID" value="ACI04508.1"/>
    <property type="molecule type" value="Genomic_DNA"/>
</dbReference>
<dbReference type="EMBL" id="FJ151549">
    <property type="protein sequence ID" value="ACI04509.1"/>
    <property type="molecule type" value="Genomic_DNA"/>
</dbReference>
<dbReference type="RefSeq" id="XP_001802887.1">
    <property type="nucleotide sequence ID" value="XM_001802835.1"/>
</dbReference>
<dbReference type="SMR" id="Q0U6E8"/>
<dbReference type="STRING" id="321614.Q0U6E8"/>
<dbReference type="EnsemblFungi" id="SNOT_12666">
    <property type="protein sequence ID" value="SNOT_12666"/>
    <property type="gene ID" value="SNOG_12666"/>
</dbReference>
<dbReference type="GeneID" id="5979798"/>
<dbReference type="KEGG" id="pno:SNOG_12666"/>
<dbReference type="VEuPathDB" id="FungiDB:JI435_126660"/>
<dbReference type="eggNOG" id="ENOG502QVPN">
    <property type="taxonomic scope" value="Eukaryota"/>
</dbReference>
<dbReference type="HOGENOM" id="CLU_036089_0_1_1"/>
<dbReference type="InParanoid" id="Q0U6E8"/>
<dbReference type="OMA" id="APFIERK"/>
<dbReference type="OrthoDB" id="418169at2759"/>
<dbReference type="BRENDA" id="1.1.1.17">
    <property type="organism ID" value="7864"/>
</dbReference>
<dbReference type="PHI-base" id="PHI:2249"/>
<dbReference type="PHI-base" id="PHI:2270"/>
<dbReference type="Proteomes" id="UP000001055">
    <property type="component" value="Unassembled WGS sequence"/>
</dbReference>
<dbReference type="GO" id="GO:0005829">
    <property type="term" value="C:cytosol"/>
    <property type="evidence" value="ECO:0000318"/>
    <property type="project" value="GO_Central"/>
</dbReference>
<dbReference type="GO" id="GO:0008926">
    <property type="term" value="F:mannitol-1-phosphate 5-dehydrogenase activity"/>
    <property type="evidence" value="ECO:0000318"/>
    <property type="project" value="GO_Central"/>
</dbReference>
<dbReference type="GO" id="GO:0019592">
    <property type="term" value="P:mannitol catabolic process"/>
    <property type="evidence" value="ECO:0000318"/>
    <property type="project" value="GO_Central"/>
</dbReference>
<dbReference type="Gene3D" id="1.10.1040.10">
    <property type="entry name" value="N-(1-d-carboxylethyl)-l-norvaline Dehydrogenase, domain 2"/>
    <property type="match status" value="1"/>
</dbReference>
<dbReference type="Gene3D" id="3.40.50.720">
    <property type="entry name" value="NAD(P)-binding Rossmann-like Domain"/>
    <property type="match status" value="1"/>
</dbReference>
<dbReference type="HAMAP" id="MF_00196">
    <property type="entry name" value="Mannitol_dehydrog"/>
    <property type="match status" value="1"/>
</dbReference>
<dbReference type="InterPro" id="IPR008927">
    <property type="entry name" value="6-PGluconate_DH-like_C_sf"/>
</dbReference>
<dbReference type="InterPro" id="IPR013328">
    <property type="entry name" value="6PGD_dom2"/>
</dbReference>
<dbReference type="InterPro" id="IPR023028">
    <property type="entry name" value="Mannitol_1_phos_5_DH"/>
</dbReference>
<dbReference type="InterPro" id="IPR000669">
    <property type="entry name" value="Mannitol_DH"/>
</dbReference>
<dbReference type="InterPro" id="IPR013118">
    <property type="entry name" value="Mannitol_DH_C"/>
</dbReference>
<dbReference type="InterPro" id="IPR013131">
    <property type="entry name" value="Mannitol_DH_N"/>
</dbReference>
<dbReference type="InterPro" id="IPR036291">
    <property type="entry name" value="NAD(P)-bd_dom_sf"/>
</dbReference>
<dbReference type="NCBIfam" id="NF002652">
    <property type="entry name" value="PRK02318.2-5"/>
    <property type="match status" value="1"/>
</dbReference>
<dbReference type="PANTHER" id="PTHR30524:SF0">
    <property type="entry name" value="ALTRONATE OXIDOREDUCTASE-RELATED"/>
    <property type="match status" value="1"/>
</dbReference>
<dbReference type="PANTHER" id="PTHR30524">
    <property type="entry name" value="MANNITOL-1-PHOSPHATE 5-DEHYDROGENASE"/>
    <property type="match status" value="1"/>
</dbReference>
<dbReference type="Pfam" id="PF01232">
    <property type="entry name" value="Mannitol_dh"/>
    <property type="match status" value="1"/>
</dbReference>
<dbReference type="Pfam" id="PF08125">
    <property type="entry name" value="Mannitol_dh_C"/>
    <property type="match status" value="1"/>
</dbReference>
<dbReference type="PRINTS" id="PR00084">
    <property type="entry name" value="MTLDHDRGNASE"/>
</dbReference>
<dbReference type="SUPFAM" id="SSF48179">
    <property type="entry name" value="6-phosphogluconate dehydrogenase C-terminal domain-like"/>
    <property type="match status" value="1"/>
</dbReference>
<dbReference type="SUPFAM" id="SSF51735">
    <property type="entry name" value="NAD(P)-binding Rossmann-fold domains"/>
    <property type="match status" value="1"/>
</dbReference>
<keyword id="KW-0520">NAD</keyword>
<keyword id="KW-0560">Oxidoreductase</keyword>